<proteinExistence type="inferred from homology"/>
<keyword id="KW-0030">Aminoacyl-tRNA synthetase</keyword>
<keyword id="KW-0067">ATP-binding</keyword>
<keyword id="KW-0963">Cytoplasm</keyword>
<keyword id="KW-0436">Ligase</keyword>
<keyword id="KW-0479">Metal-binding</keyword>
<keyword id="KW-0547">Nucleotide-binding</keyword>
<keyword id="KW-0648">Protein biosynthesis</keyword>
<keyword id="KW-0862">Zinc</keyword>
<protein>
    <recommendedName>
        <fullName evidence="1">Cysteine--tRNA ligase</fullName>
        <ecNumber evidence="1">6.1.1.16</ecNumber>
    </recommendedName>
    <alternativeName>
        <fullName evidence="1">Cysteinyl-tRNA synthetase</fullName>
        <shortName evidence="1">CysRS</shortName>
    </alternativeName>
</protein>
<reference key="1">
    <citation type="journal article" date="2008" name="J. Bacteriol.">
        <title>The complete genome sequence of Thermococcus onnurineus NA1 reveals a mixed heterotrophic and carboxydotrophic metabolism.</title>
        <authorList>
            <person name="Lee H.S."/>
            <person name="Kang S.G."/>
            <person name="Bae S.S."/>
            <person name="Lim J.K."/>
            <person name="Cho Y."/>
            <person name="Kim Y.J."/>
            <person name="Jeon J.H."/>
            <person name="Cha S.-S."/>
            <person name="Kwon K.K."/>
            <person name="Kim H.-T."/>
            <person name="Park C.-J."/>
            <person name="Lee H.-W."/>
            <person name="Kim S.I."/>
            <person name="Chun J."/>
            <person name="Colwell R.R."/>
            <person name="Kim S.-J."/>
            <person name="Lee J.-H."/>
        </authorList>
    </citation>
    <scope>NUCLEOTIDE SEQUENCE [LARGE SCALE GENOMIC DNA]</scope>
    <source>
        <strain>NA1</strain>
    </source>
</reference>
<feature type="chain" id="PRO_1000090881" description="Cysteine--tRNA ligase">
    <location>
        <begin position="1"/>
        <end position="476"/>
    </location>
</feature>
<feature type="short sequence motif" description="'HIGH' region">
    <location>
        <begin position="31"/>
        <end position="41"/>
    </location>
</feature>
<feature type="short sequence motif" description="'KMSKS' region">
    <location>
        <begin position="266"/>
        <end position="270"/>
    </location>
</feature>
<feature type="binding site" evidence="1">
    <location>
        <position position="29"/>
    </location>
    <ligand>
        <name>Zn(2+)</name>
        <dbReference type="ChEBI" id="CHEBI:29105"/>
    </ligand>
</feature>
<feature type="binding site" evidence="1">
    <location>
        <position position="209"/>
    </location>
    <ligand>
        <name>Zn(2+)</name>
        <dbReference type="ChEBI" id="CHEBI:29105"/>
    </ligand>
</feature>
<feature type="binding site" evidence="1">
    <location>
        <position position="234"/>
    </location>
    <ligand>
        <name>Zn(2+)</name>
        <dbReference type="ChEBI" id="CHEBI:29105"/>
    </ligand>
</feature>
<feature type="binding site" evidence="1">
    <location>
        <position position="238"/>
    </location>
    <ligand>
        <name>Zn(2+)</name>
        <dbReference type="ChEBI" id="CHEBI:29105"/>
    </ligand>
</feature>
<feature type="binding site" evidence="1">
    <location>
        <position position="269"/>
    </location>
    <ligand>
        <name>ATP</name>
        <dbReference type="ChEBI" id="CHEBI:30616"/>
    </ligand>
</feature>
<name>SYC_THEON</name>
<evidence type="ECO:0000255" key="1">
    <source>
        <dbReference type="HAMAP-Rule" id="MF_00041"/>
    </source>
</evidence>
<sequence length="476" mass="55767">MAIRVYNTLTKQKEEFRPLREGEVRMYVCGPTVYDYTHLGHARTYIAFDVIRRYLEHRGYTVLMVMNFTDIDDKIIRRANETGEDPKELAEKFLRYFLEDMKALKVKPADIYPRVTEHIQDIIDFVRKLQEKGYAYEGNDGVYFEVRKFKDYGKLSGIKLEELVKGARVEPGEGKKNPEDFALWKKAKPGEPKWESPWGEGRPGWHIECSTMSTKYLGESFDIHGGGNDLIFPHHENEIAQSEACTGHEWVRYWLHTGFVMVSGEKMSKSLGNFVTIRELLQKYSPEVIRFFVLQKHYRSPLDYTEEGIQHAKNNLERLYNTLENIRVAMEKADVAFRWDEEEFELYETVREARKKFYDAMDDDFNTAEALKAVFEVSNAVNRYLTKVEKPKESVLRKALEFFKIVSEVFGLFEDYFKEQKAGDEEALIELLVSVRAELRKQRNFTLADKIRDELKALGIQLEDTPQGTIWKRISV</sequence>
<gene>
    <name evidence="1" type="primary">cysS</name>
    <name type="ordered locus">TON_0602</name>
</gene>
<organism>
    <name type="scientific">Thermococcus onnurineus (strain NA1)</name>
    <dbReference type="NCBI Taxonomy" id="523850"/>
    <lineage>
        <taxon>Archaea</taxon>
        <taxon>Methanobacteriati</taxon>
        <taxon>Methanobacteriota</taxon>
        <taxon>Thermococci</taxon>
        <taxon>Thermococcales</taxon>
        <taxon>Thermococcaceae</taxon>
        <taxon>Thermococcus</taxon>
    </lineage>
</organism>
<dbReference type="EC" id="6.1.1.16" evidence="1"/>
<dbReference type="EMBL" id="CP000855">
    <property type="protein sequence ID" value="ACJ16089.1"/>
    <property type="molecule type" value="Genomic_DNA"/>
</dbReference>
<dbReference type="RefSeq" id="WP_012571561.1">
    <property type="nucleotide sequence ID" value="NC_011529.1"/>
</dbReference>
<dbReference type="SMR" id="B6YUQ3"/>
<dbReference type="STRING" id="523850.TON_0602"/>
<dbReference type="GeneID" id="7016900"/>
<dbReference type="KEGG" id="ton:TON_0602"/>
<dbReference type="PATRIC" id="fig|523850.10.peg.602"/>
<dbReference type="eggNOG" id="arCOG00486">
    <property type="taxonomic scope" value="Archaea"/>
</dbReference>
<dbReference type="HOGENOM" id="CLU_013528_0_1_2"/>
<dbReference type="OrthoDB" id="9445at2157"/>
<dbReference type="Proteomes" id="UP000002727">
    <property type="component" value="Chromosome"/>
</dbReference>
<dbReference type="GO" id="GO:0005737">
    <property type="term" value="C:cytoplasm"/>
    <property type="evidence" value="ECO:0007669"/>
    <property type="project" value="UniProtKB-SubCell"/>
</dbReference>
<dbReference type="GO" id="GO:0005524">
    <property type="term" value="F:ATP binding"/>
    <property type="evidence" value="ECO:0007669"/>
    <property type="project" value="UniProtKB-UniRule"/>
</dbReference>
<dbReference type="GO" id="GO:0004817">
    <property type="term" value="F:cysteine-tRNA ligase activity"/>
    <property type="evidence" value="ECO:0007669"/>
    <property type="project" value="UniProtKB-UniRule"/>
</dbReference>
<dbReference type="GO" id="GO:0008270">
    <property type="term" value="F:zinc ion binding"/>
    <property type="evidence" value="ECO:0007669"/>
    <property type="project" value="UniProtKB-UniRule"/>
</dbReference>
<dbReference type="GO" id="GO:0006423">
    <property type="term" value="P:cysteinyl-tRNA aminoacylation"/>
    <property type="evidence" value="ECO:0007669"/>
    <property type="project" value="UniProtKB-UniRule"/>
</dbReference>
<dbReference type="CDD" id="cd00672">
    <property type="entry name" value="CysRS_core"/>
    <property type="match status" value="1"/>
</dbReference>
<dbReference type="FunFam" id="3.40.50.620:FF:000009">
    <property type="entry name" value="Cysteine--tRNA ligase"/>
    <property type="match status" value="1"/>
</dbReference>
<dbReference type="Gene3D" id="1.20.120.1910">
    <property type="entry name" value="Cysteine-tRNA ligase, C-terminal anti-codon recognition domain"/>
    <property type="match status" value="1"/>
</dbReference>
<dbReference type="Gene3D" id="3.40.50.620">
    <property type="entry name" value="HUPs"/>
    <property type="match status" value="1"/>
</dbReference>
<dbReference type="HAMAP" id="MF_00041">
    <property type="entry name" value="Cys_tRNA_synth"/>
    <property type="match status" value="1"/>
</dbReference>
<dbReference type="InterPro" id="IPR015803">
    <property type="entry name" value="Cys-tRNA-ligase"/>
</dbReference>
<dbReference type="InterPro" id="IPR015273">
    <property type="entry name" value="Cys-tRNA-synt_Ia_DALR"/>
</dbReference>
<dbReference type="InterPro" id="IPR024909">
    <property type="entry name" value="Cys-tRNA/MSH_ligase"/>
</dbReference>
<dbReference type="InterPro" id="IPR014729">
    <property type="entry name" value="Rossmann-like_a/b/a_fold"/>
</dbReference>
<dbReference type="InterPro" id="IPR032678">
    <property type="entry name" value="tRNA-synt_1_cat_dom"/>
</dbReference>
<dbReference type="InterPro" id="IPR009080">
    <property type="entry name" value="tRNAsynth_Ia_anticodon-bd"/>
</dbReference>
<dbReference type="NCBIfam" id="TIGR00435">
    <property type="entry name" value="cysS"/>
    <property type="match status" value="1"/>
</dbReference>
<dbReference type="PANTHER" id="PTHR10890:SF3">
    <property type="entry name" value="CYSTEINE--TRNA LIGASE, CYTOPLASMIC"/>
    <property type="match status" value="1"/>
</dbReference>
<dbReference type="PANTHER" id="PTHR10890">
    <property type="entry name" value="CYSTEINYL-TRNA SYNTHETASE"/>
    <property type="match status" value="1"/>
</dbReference>
<dbReference type="Pfam" id="PF09190">
    <property type="entry name" value="DALR_2"/>
    <property type="match status" value="1"/>
</dbReference>
<dbReference type="Pfam" id="PF01406">
    <property type="entry name" value="tRNA-synt_1e"/>
    <property type="match status" value="1"/>
</dbReference>
<dbReference type="PRINTS" id="PR00983">
    <property type="entry name" value="TRNASYNTHCYS"/>
</dbReference>
<dbReference type="SMART" id="SM00840">
    <property type="entry name" value="DALR_2"/>
    <property type="match status" value="1"/>
</dbReference>
<dbReference type="SUPFAM" id="SSF47323">
    <property type="entry name" value="Anticodon-binding domain of a subclass of class I aminoacyl-tRNA synthetases"/>
    <property type="match status" value="1"/>
</dbReference>
<dbReference type="SUPFAM" id="SSF52374">
    <property type="entry name" value="Nucleotidylyl transferase"/>
    <property type="match status" value="1"/>
</dbReference>
<comment type="catalytic activity">
    <reaction evidence="1">
        <text>tRNA(Cys) + L-cysteine + ATP = L-cysteinyl-tRNA(Cys) + AMP + diphosphate</text>
        <dbReference type="Rhea" id="RHEA:17773"/>
        <dbReference type="Rhea" id="RHEA-COMP:9661"/>
        <dbReference type="Rhea" id="RHEA-COMP:9679"/>
        <dbReference type="ChEBI" id="CHEBI:30616"/>
        <dbReference type="ChEBI" id="CHEBI:33019"/>
        <dbReference type="ChEBI" id="CHEBI:35235"/>
        <dbReference type="ChEBI" id="CHEBI:78442"/>
        <dbReference type="ChEBI" id="CHEBI:78517"/>
        <dbReference type="ChEBI" id="CHEBI:456215"/>
        <dbReference type="EC" id="6.1.1.16"/>
    </reaction>
</comment>
<comment type="cofactor">
    <cofactor evidence="1">
        <name>Zn(2+)</name>
        <dbReference type="ChEBI" id="CHEBI:29105"/>
    </cofactor>
    <text evidence="1">Binds 1 zinc ion per subunit.</text>
</comment>
<comment type="subcellular location">
    <subcellularLocation>
        <location evidence="1">Cytoplasm</location>
    </subcellularLocation>
</comment>
<comment type="similarity">
    <text evidence="1">Belongs to the class-I aminoacyl-tRNA synthetase family.</text>
</comment>
<accession>B6YUQ3</accession>